<name>GPDA_ZYMMO</name>
<keyword id="KW-0963">Cytoplasm</keyword>
<keyword id="KW-0444">Lipid biosynthesis</keyword>
<keyword id="KW-0443">Lipid metabolism</keyword>
<keyword id="KW-0520">NAD</keyword>
<keyword id="KW-0521">NADP</keyword>
<keyword id="KW-0547">Nucleotide-binding</keyword>
<keyword id="KW-0560">Oxidoreductase</keyword>
<keyword id="KW-0594">Phospholipid biosynthesis</keyword>
<keyword id="KW-1208">Phospholipid metabolism</keyword>
<keyword id="KW-1185">Reference proteome</keyword>
<organism>
    <name type="scientific">Zymomonas mobilis subsp. mobilis (strain ATCC 31821 / ZM4 / CP4)</name>
    <dbReference type="NCBI Taxonomy" id="264203"/>
    <lineage>
        <taxon>Bacteria</taxon>
        <taxon>Pseudomonadati</taxon>
        <taxon>Pseudomonadota</taxon>
        <taxon>Alphaproteobacteria</taxon>
        <taxon>Sphingomonadales</taxon>
        <taxon>Zymomonadaceae</taxon>
        <taxon>Zymomonas</taxon>
    </lineage>
</organism>
<evidence type="ECO:0000255" key="1">
    <source>
        <dbReference type="HAMAP-Rule" id="MF_00394"/>
    </source>
</evidence>
<gene>
    <name evidence="1" type="primary">gpsA</name>
    <name type="ordered locus">ZMO1905</name>
</gene>
<sequence length="340" mass="36310">MPVLEEKKTADHFHHIGVLGAGSWGTALAAVASYKGAVTLWGRKREIIDAINQRHINPDYLPDIIIPRTIHATDELNDLSSASALLVAIPAQKMRSVLRQIPNDSRPLILCAKGIEAESGLLMSQLAADIFPHRPIAVLSGPTFASEVARHLPTAVTLAAKEKDIRAALMQRLAIPTFRPYASSDVIGADVGGAVKNVLAIACGVVAGAKLGNNARAAVISRGFAEMNRFGIALGAKEETLTGLSGLGDLVLTCSSELSRNFTFGKKLGEGYSYEEQQKKRAVTTEGVFTAPVLQRVANKLKVEMPLVSAICDLIEGKSVNSVLERLLSRPLKGEYSISV</sequence>
<comment type="function">
    <text evidence="1">Catalyzes the reduction of the glycolytic intermediate dihydroxyacetone phosphate (DHAP) to sn-glycerol 3-phosphate (G3P), the key precursor for phospholipid synthesis.</text>
</comment>
<comment type="catalytic activity">
    <reaction evidence="1">
        <text>sn-glycerol 3-phosphate + NAD(+) = dihydroxyacetone phosphate + NADH + H(+)</text>
        <dbReference type="Rhea" id="RHEA:11092"/>
        <dbReference type="ChEBI" id="CHEBI:15378"/>
        <dbReference type="ChEBI" id="CHEBI:57540"/>
        <dbReference type="ChEBI" id="CHEBI:57597"/>
        <dbReference type="ChEBI" id="CHEBI:57642"/>
        <dbReference type="ChEBI" id="CHEBI:57945"/>
        <dbReference type="EC" id="1.1.1.94"/>
    </reaction>
    <physiologicalReaction direction="right-to-left" evidence="1">
        <dbReference type="Rhea" id="RHEA:11094"/>
    </physiologicalReaction>
</comment>
<comment type="catalytic activity">
    <reaction evidence="1">
        <text>sn-glycerol 3-phosphate + NADP(+) = dihydroxyacetone phosphate + NADPH + H(+)</text>
        <dbReference type="Rhea" id="RHEA:11096"/>
        <dbReference type="ChEBI" id="CHEBI:15378"/>
        <dbReference type="ChEBI" id="CHEBI:57597"/>
        <dbReference type="ChEBI" id="CHEBI:57642"/>
        <dbReference type="ChEBI" id="CHEBI:57783"/>
        <dbReference type="ChEBI" id="CHEBI:58349"/>
        <dbReference type="EC" id="1.1.1.94"/>
    </reaction>
    <physiologicalReaction direction="right-to-left" evidence="1">
        <dbReference type="Rhea" id="RHEA:11098"/>
    </physiologicalReaction>
</comment>
<comment type="pathway">
    <text evidence="1">Membrane lipid metabolism; glycerophospholipid metabolism.</text>
</comment>
<comment type="subcellular location">
    <subcellularLocation>
        <location evidence="1">Cytoplasm</location>
    </subcellularLocation>
</comment>
<comment type="similarity">
    <text evidence="1">Belongs to the NAD-dependent glycerol-3-phosphate dehydrogenase family.</text>
</comment>
<dbReference type="EC" id="1.1.1.94" evidence="1"/>
<dbReference type="EMBL" id="AE008692">
    <property type="protein sequence ID" value="AAV90529.1"/>
    <property type="molecule type" value="Genomic_DNA"/>
</dbReference>
<dbReference type="RefSeq" id="WP_011241630.1">
    <property type="nucleotide sequence ID" value="NZ_CP035711.1"/>
</dbReference>
<dbReference type="SMR" id="Q5NL81"/>
<dbReference type="STRING" id="264203.ZMO1905"/>
<dbReference type="KEGG" id="zmo:ZMO1905"/>
<dbReference type="eggNOG" id="COG0240">
    <property type="taxonomic scope" value="Bacteria"/>
</dbReference>
<dbReference type="HOGENOM" id="CLU_033449_0_2_5"/>
<dbReference type="UniPathway" id="UPA00940"/>
<dbReference type="Proteomes" id="UP000001173">
    <property type="component" value="Chromosome"/>
</dbReference>
<dbReference type="GO" id="GO:0005829">
    <property type="term" value="C:cytosol"/>
    <property type="evidence" value="ECO:0007669"/>
    <property type="project" value="TreeGrafter"/>
</dbReference>
<dbReference type="GO" id="GO:0047952">
    <property type="term" value="F:glycerol-3-phosphate dehydrogenase [NAD(P)+] activity"/>
    <property type="evidence" value="ECO:0007669"/>
    <property type="project" value="UniProtKB-UniRule"/>
</dbReference>
<dbReference type="GO" id="GO:0051287">
    <property type="term" value="F:NAD binding"/>
    <property type="evidence" value="ECO:0007669"/>
    <property type="project" value="InterPro"/>
</dbReference>
<dbReference type="GO" id="GO:0005975">
    <property type="term" value="P:carbohydrate metabolic process"/>
    <property type="evidence" value="ECO:0007669"/>
    <property type="project" value="InterPro"/>
</dbReference>
<dbReference type="GO" id="GO:0046167">
    <property type="term" value="P:glycerol-3-phosphate biosynthetic process"/>
    <property type="evidence" value="ECO:0007669"/>
    <property type="project" value="UniProtKB-UniRule"/>
</dbReference>
<dbReference type="GO" id="GO:0046168">
    <property type="term" value="P:glycerol-3-phosphate catabolic process"/>
    <property type="evidence" value="ECO:0007669"/>
    <property type="project" value="InterPro"/>
</dbReference>
<dbReference type="GO" id="GO:0006650">
    <property type="term" value="P:glycerophospholipid metabolic process"/>
    <property type="evidence" value="ECO:0007669"/>
    <property type="project" value="UniProtKB-UniRule"/>
</dbReference>
<dbReference type="GO" id="GO:0008654">
    <property type="term" value="P:phospholipid biosynthetic process"/>
    <property type="evidence" value="ECO:0007669"/>
    <property type="project" value="UniProtKB-KW"/>
</dbReference>
<dbReference type="FunFam" id="1.10.1040.10:FF:000001">
    <property type="entry name" value="Glycerol-3-phosphate dehydrogenase [NAD(P)+]"/>
    <property type="match status" value="1"/>
</dbReference>
<dbReference type="FunFam" id="3.40.50.720:FF:000019">
    <property type="entry name" value="Glycerol-3-phosphate dehydrogenase [NAD(P)+]"/>
    <property type="match status" value="1"/>
</dbReference>
<dbReference type="Gene3D" id="1.10.1040.10">
    <property type="entry name" value="N-(1-d-carboxylethyl)-l-norvaline Dehydrogenase, domain 2"/>
    <property type="match status" value="1"/>
</dbReference>
<dbReference type="Gene3D" id="3.40.50.720">
    <property type="entry name" value="NAD(P)-binding Rossmann-like Domain"/>
    <property type="match status" value="1"/>
</dbReference>
<dbReference type="HAMAP" id="MF_00394">
    <property type="entry name" value="NAD_Glyc3P_dehydrog"/>
    <property type="match status" value="1"/>
</dbReference>
<dbReference type="InterPro" id="IPR008927">
    <property type="entry name" value="6-PGluconate_DH-like_C_sf"/>
</dbReference>
<dbReference type="InterPro" id="IPR013328">
    <property type="entry name" value="6PGD_dom2"/>
</dbReference>
<dbReference type="InterPro" id="IPR006168">
    <property type="entry name" value="G3P_DH_NAD-dep"/>
</dbReference>
<dbReference type="InterPro" id="IPR006109">
    <property type="entry name" value="G3P_DH_NAD-dep_C"/>
</dbReference>
<dbReference type="InterPro" id="IPR011128">
    <property type="entry name" value="G3P_DH_NAD-dep_N"/>
</dbReference>
<dbReference type="InterPro" id="IPR036291">
    <property type="entry name" value="NAD(P)-bd_dom_sf"/>
</dbReference>
<dbReference type="NCBIfam" id="NF000940">
    <property type="entry name" value="PRK00094.1-2"/>
    <property type="match status" value="1"/>
</dbReference>
<dbReference type="NCBIfam" id="NF000942">
    <property type="entry name" value="PRK00094.1-4"/>
    <property type="match status" value="1"/>
</dbReference>
<dbReference type="PANTHER" id="PTHR11728">
    <property type="entry name" value="GLYCEROL-3-PHOSPHATE DEHYDROGENASE"/>
    <property type="match status" value="1"/>
</dbReference>
<dbReference type="PANTHER" id="PTHR11728:SF1">
    <property type="entry name" value="GLYCEROL-3-PHOSPHATE DEHYDROGENASE [NAD(+)] 2, CHLOROPLASTIC"/>
    <property type="match status" value="1"/>
</dbReference>
<dbReference type="Pfam" id="PF07479">
    <property type="entry name" value="NAD_Gly3P_dh_C"/>
    <property type="match status" value="1"/>
</dbReference>
<dbReference type="Pfam" id="PF01210">
    <property type="entry name" value="NAD_Gly3P_dh_N"/>
    <property type="match status" value="1"/>
</dbReference>
<dbReference type="PIRSF" id="PIRSF000114">
    <property type="entry name" value="Glycerol-3-P_dh"/>
    <property type="match status" value="1"/>
</dbReference>
<dbReference type="PRINTS" id="PR00077">
    <property type="entry name" value="GPDHDRGNASE"/>
</dbReference>
<dbReference type="SUPFAM" id="SSF48179">
    <property type="entry name" value="6-phosphogluconate dehydrogenase C-terminal domain-like"/>
    <property type="match status" value="1"/>
</dbReference>
<dbReference type="SUPFAM" id="SSF51735">
    <property type="entry name" value="NAD(P)-binding Rossmann-fold domains"/>
    <property type="match status" value="1"/>
</dbReference>
<dbReference type="PROSITE" id="PS00957">
    <property type="entry name" value="NAD_G3PDH"/>
    <property type="match status" value="1"/>
</dbReference>
<proteinExistence type="inferred from homology"/>
<feature type="chain" id="PRO_0000138067" description="Glycerol-3-phosphate dehydrogenase [NAD(P)+]">
    <location>
        <begin position="1"/>
        <end position="340"/>
    </location>
</feature>
<feature type="active site" description="Proton acceptor" evidence="1">
    <location>
        <position position="196"/>
    </location>
</feature>
<feature type="binding site" evidence="1">
    <location>
        <position position="23"/>
    </location>
    <ligand>
        <name>NADPH</name>
        <dbReference type="ChEBI" id="CHEBI:57783"/>
    </ligand>
</feature>
<feature type="binding site" evidence="1">
    <location>
        <position position="24"/>
    </location>
    <ligand>
        <name>NADPH</name>
        <dbReference type="ChEBI" id="CHEBI:57783"/>
    </ligand>
</feature>
<feature type="binding site" evidence="1">
    <location>
        <position position="43"/>
    </location>
    <ligand>
        <name>NADPH</name>
        <dbReference type="ChEBI" id="CHEBI:57783"/>
    </ligand>
</feature>
<feature type="binding site" evidence="1">
    <location>
        <position position="44"/>
    </location>
    <ligand>
        <name>NADPH</name>
        <dbReference type="ChEBI" id="CHEBI:57783"/>
    </ligand>
</feature>
<feature type="binding site" evidence="1">
    <location>
        <position position="113"/>
    </location>
    <ligand>
        <name>NADPH</name>
        <dbReference type="ChEBI" id="CHEBI:57783"/>
    </ligand>
</feature>
<feature type="binding site" evidence="1">
    <location>
        <position position="113"/>
    </location>
    <ligand>
        <name>sn-glycerol 3-phosphate</name>
        <dbReference type="ChEBI" id="CHEBI:57597"/>
    </ligand>
</feature>
<feature type="binding site" evidence="1">
    <location>
        <position position="141"/>
    </location>
    <ligand>
        <name>sn-glycerol 3-phosphate</name>
        <dbReference type="ChEBI" id="CHEBI:57597"/>
    </ligand>
</feature>
<feature type="binding site" evidence="1">
    <location>
        <position position="143"/>
    </location>
    <ligand>
        <name>sn-glycerol 3-phosphate</name>
        <dbReference type="ChEBI" id="CHEBI:57597"/>
    </ligand>
</feature>
<feature type="binding site" evidence="1">
    <location>
        <position position="145"/>
    </location>
    <ligand>
        <name>NADPH</name>
        <dbReference type="ChEBI" id="CHEBI:57783"/>
    </ligand>
</feature>
<feature type="binding site" evidence="1">
    <location>
        <position position="196"/>
    </location>
    <ligand>
        <name>sn-glycerol 3-phosphate</name>
        <dbReference type="ChEBI" id="CHEBI:57597"/>
    </ligand>
</feature>
<feature type="binding site" evidence="1">
    <location>
        <position position="249"/>
    </location>
    <ligand>
        <name>sn-glycerol 3-phosphate</name>
        <dbReference type="ChEBI" id="CHEBI:57597"/>
    </ligand>
</feature>
<feature type="binding site" evidence="1">
    <location>
        <position position="259"/>
    </location>
    <ligand>
        <name>sn-glycerol 3-phosphate</name>
        <dbReference type="ChEBI" id="CHEBI:57597"/>
    </ligand>
</feature>
<feature type="binding site" evidence="1">
    <location>
        <position position="260"/>
    </location>
    <ligand>
        <name>NADPH</name>
        <dbReference type="ChEBI" id="CHEBI:57783"/>
    </ligand>
</feature>
<feature type="binding site" evidence="1">
    <location>
        <position position="260"/>
    </location>
    <ligand>
        <name>sn-glycerol 3-phosphate</name>
        <dbReference type="ChEBI" id="CHEBI:57597"/>
    </ligand>
</feature>
<feature type="binding site" evidence="1">
    <location>
        <position position="261"/>
    </location>
    <ligand>
        <name>sn-glycerol 3-phosphate</name>
        <dbReference type="ChEBI" id="CHEBI:57597"/>
    </ligand>
</feature>
<feature type="binding site" evidence="1">
    <location>
        <position position="286"/>
    </location>
    <ligand>
        <name>NADPH</name>
        <dbReference type="ChEBI" id="CHEBI:57783"/>
    </ligand>
</feature>
<reference key="1">
    <citation type="journal article" date="2005" name="Nat. Biotechnol.">
        <title>The genome sequence of the ethanologenic bacterium Zymomonas mobilis ZM4.</title>
        <authorList>
            <person name="Seo J.-S."/>
            <person name="Chong H."/>
            <person name="Park H.S."/>
            <person name="Yoon K.-O."/>
            <person name="Jung C."/>
            <person name="Kim J.J."/>
            <person name="Hong J.H."/>
            <person name="Kim H."/>
            <person name="Kim J.-H."/>
            <person name="Kil J.-I."/>
            <person name="Park C.J."/>
            <person name="Oh H.-M."/>
            <person name="Lee J.-S."/>
            <person name="Jin S.-J."/>
            <person name="Um H.-W."/>
            <person name="Lee H.-J."/>
            <person name="Oh S.-J."/>
            <person name="Kim J.Y."/>
            <person name="Kang H.L."/>
            <person name="Lee S.Y."/>
            <person name="Lee K.J."/>
            <person name="Kang H.S."/>
        </authorList>
    </citation>
    <scope>NUCLEOTIDE SEQUENCE [LARGE SCALE GENOMIC DNA]</scope>
    <source>
        <strain>ATCC 31821 / ZM4 / CP4</strain>
    </source>
</reference>
<accession>Q5NL81</accession>
<protein>
    <recommendedName>
        <fullName evidence="1">Glycerol-3-phosphate dehydrogenase [NAD(P)+]</fullName>
        <ecNumber evidence="1">1.1.1.94</ecNumber>
    </recommendedName>
    <alternativeName>
        <fullName evidence="1">NAD(P)(+)-dependent glycerol-3-phosphate dehydrogenase</fullName>
    </alternativeName>
    <alternativeName>
        <fullName evidence="1">NAD(P)H-dependent dihydroxyacetone-phosphate reductase</fullName>
    </alternativeName>
</protein>